<feature type="chain" id="PRO_1000123893" description="Probable protein kinase UbiB">
    <location>
        <begin position="1"/>
        <end position="525"/>
    </location>
</feature>
<feature type="transmembrane region" description="Helical" evidence="1">
    <location>
        <begin position="501"/>
        <end position="521"/>
    </location>
</feature>
<feature type="domain" description="Protein kinase" evidence="1">
    <location>
        <begin position="118"/>
        <end position="500"/>
    </location>
</feature>
<feature type="active site" description="Proton acceptor" evidence="1">
    <location>
        <position position="285"/>
    </location>
</feature>
<feature type="binding site" evidence="1">
    <location>
        <begin position="124"/>
        <end position="132"/>
    </location>
    <ligand>
        <name>ATP</name>
        <dbReference type="ChEBI" id="CHEBI:30616"/>
    </ligand>
</feature>
<feature type="binding site" evidence="1">
    <location>
        <position position="150"/>
    </location>
    <ligand>
        <name>ATP</name>
        <dbReference type="ChEBI" id="CHEBI:30616"/>
    </ligand>
</feature>
<gene>
    <name evidence="1" type="primary">ubiB</name>
    <name type="ordered locus">BMASAVP1_A2757</name>
</gene>
<organism>
    <name type="scientific">Burkholderia mallei (strain SAVP1)</name>
    <dbReference type="NCBI Taxonomy" id="320388"/>
    <lineage>
        <taxon>Bacteria</taxon>
        <taxon>Pseudomonadati</taxon>
        <taxon>Pseudomonadota</taxon>
        <taxon>Betaproteobacteria</taxon>
        <taxon>Burkholderiales</taxon>
        <taxon>Burkholderiaceae</taxon>
        <taxon>Burkholderia</taxon>
        <taxon>pseudomallei group</taxon>
    </lineage>
</organism>
<evidence type="ECO:0000255" key="1">
    <source>
        <dbReference type="HAMAP-Rule" id="MF_00414"/>
    </source>
</evidence>
<accession>A1V750</accession>
<protein>
    <recommendedName>
        <fullName evidence="1">Probable protein kinase UbiB</fullName>
        <ecNumber evidence="1">2.7.-.-</ecNumber>
    </recommendedName>
    <alternativeName>
        <fullName evidence="1">Ubiquinone biosynthesis protein UbiB</fullName>
    </alternativeName>
</protein>
<reference key="1">
    <citation type="journal article" date="2010" name="Genome Biol. Evol.">
        <title>Continuing evolution of Burkholderia mallei through genome reduction and large-scale rearrangements.</title>
        <authorList>
            <person name="Losada L."/>
            <person name="Ronning C.M."/>
            <person name="DeShazer D."/>
            <person name="Woods D."/>
            <person name="Fedorova N."/>
            <person name="Kim H.S."/>
            <person name="Shabalina S.A."/>
            <person name="Pearson T.R."/>
            <person name="Brinkac L."/>
            <person name="Tan P."/>
            <person name="Nandi T."/>
            <person name="Crabtree J."/>
            <person name="Badger J."/>
            <person name="Beckstrom-Sternberg S."/>
            <person name="Saqib M."/>
            <person name="Schutzer S.E."/>
            <person name="Keim P."/>
            <person name="Nierman W.C."/>
        </authorList>
    </citation>
    <scope>NUCLEOTIDE SEQUENCE [LARGE SCALE GENOMIC DNA]</scope>
    <source>
        <strain>SAVP1</strain>
    </source>
</reference>
<name>UBIB_BURMS</name>
<keyword id="KW-0067">ATP-binding</keyword>
<keyword id="KW-0997">Cell inner membrane</keyword>
<keyword id="KW-1003">Cell membrane</keyword>
<keyword id="KW-0418">Kinase</keyword>
<keyword id="KW-0472">Membrane</keyword>
<keyword id="KW-0547">Nucleotide-binding</keyword>
<keyword id="KW-0808">Transferase</keyword>
<keyword id="KW-0812">Transmembrane</keyword>
<keyword id="KW-1133">Transmembrane helix</keyword>
<keyword id="KW-0831">Ubiquinone biosynthesis</keyword>
<dbReference type="EC" id="2.7.-.-" evidence="1"/>
<dbReference type="EMBL" id="CP000526">
    <property type="protein sequence ID" value="ABM52165.1"/>
    <property type="molecule type" value="Genomic_DNA"/>
</dbReference>
<dbReference type="RefSeq" id="WP_004189815.1">
    <property type="nucleotide sequence ID" value="NC_008785.1"/>
</dbReference>
<dbReference type="SMR" id="A1V750"/>
<dbReference type="GeneID" id="93059152"/>
<dbReference type="KEGG" id="bmv:BMASAVP1_A2757"/>
<dbReference type="HOGENOM" id="CLU_006533_0_0_4"/>
<dbReference type="UniPathway" id="UPA00232"/>
<dbReference type="GO" id="GO:0005886">
    <property type="term" value="C:plasma membrane"/>
    <property type="evidence" value="ECO:0007669"/>
    <property type="project" value="UniProtKB-SubCell"/>
</dbReference>
<dbReference type="GO" id="GO:0005524">
    <property type="term" value="F:ATP binding"/>
    <property type="evidence" value="ECO:0007669"/>
    <property type="project" value="UniProtKB-KW"/>
</dbReference>
<dbReference type="GO" id="GO:0004672">
    <property type="term" value="F:protein kinase activity"/>
    <property type="evidence" value="ECO:0007669"/>
    <property type="project" value="UniProtKB-UniRule"/>
</dbReference>
<dbReference type="GO" id="GO:0010795">
    <property type="term" value="P:regulation of ubiquinone biosynthetic process"/>
    <property type="evidence" value="ECO:0007669"/>
    <property type="project" value="UniProtKB-UniRule"/>
</dbReference>
<dbReference type="GO" id="GO:0006744">
    <property type="term" value="P:ubiquinone biosynthetic process"/>
    <property type="evidence" value="ECO:0007669"/>
    <property type="project" value="UniProtKB-UniPathway"/>
</dbReference>
<dbReference type="CDD" id="cd13972">
    <property type="entry name" value="UbiB"/>
    <property type="match status" value="1"/>
</dbReference>
<dbReference type="HAMAP" id="MF_00414">
    <property type="entry name" value="UbiB"/>
    <property type="match status" value="1"/>
</dbReference>
<dbReference type="InterPro" id="IPR004147">
    <property type="entry name" value="ABC1_dom"/>
</dbReference>
<dbReference type="InterPro" id="IPR011009">
    <property type="entry name" value="Kinase-like_dom_sf"/>
</dbReference>
<dbReference type="InterPro" id="IPR010232">
    <property type="entry name" value="UbiB"/>
</dbReference>
<dbReference type="InterPro" id="IPR045308">
    <property type="entry name" value="UbiB_bact"/>
</dbReference>
<dbReference type="InterPro" id="IPR050154">
    <property type="entry name" value="UbiB_kinase"/>
</dbReference>
<dbReference type="NCBIfam" id="NF003404">
    <property type="entry name" value="PRK04750.1"/>
    <property type="match status" value="1"/>
</dbReference>
<dbReference type="NCBIfam" id="TIGR01982">
    <property type="entry name" value="UbiB"/>
    <property type="match status" value="1"/>
</dbReference>
<dbReference type="PANTHER" id="PTHR10566">
    <property type="entry name" value="CHAPERONE-ACTIVITY OF BC1 COMPLEX CABC1 -RELATED"/>
    <property type="match status" value="1"/>
</dbReference>
<dbReference type="PANTHER" id="PTHR10566:SF113">
    <property type="entry name" value="PROTEIN ACTIVITY OF BC1 COMPLEX KINASE 7, CHLOROPLASTIC"/>
    <property type="match status" value="1"/>
</dbReference>
<dbReference type="Pfam" id="PF03109">
    <property type="entry name" value="ABC1"/>
    <property type="match status" value="1"/>
</dbReference>
<dbReference type="SUPFAM" id="SSF56112">
    <property type="entry name" value="Protein kinase-like (PK-like)"/>
    <property type="match status" value="1"/>
</dbReference>
<sequence length="525" mass="59775">MRIFRFVKIVFTVIRFGLDEVMLSRIENPRVKLLLRITTIGRRFADPPAVRLRRALESLGPIFVKFGQVLSTRRDLLPVDFANELAKLQDQVPPFDSAVAIAIVEKSLGARIDVLFDEFERVPVASASIAQVHFAKLKQGEHKGKAVAVKVLRPNMLPVIDSDLALMRDIATWAERLWADGRRLKPREVVAEFDKYLHDELDLMREAANGSQLRRNFAGLDLLLVPEMFWDYSTPAVLVMERMTGVPISQVDTLRAAGVDIPKLAREGVEIFFTQVFRDGFFHADMHPGNIQVSLDPKHFGRYIALDFGIVGALSDFDKNYLAQNFLAFFKRDYHRVATLHLESGWVPPDTRVEELESAIRAVCEPYFDRALKDISLGQVLMRLFSTSRRFNVEIQPQLVLLQKTMLNVEGLGRSLDPELDLWKTAKPYLERWMTEQIGLRGWYERFKVEAPQWSKTLPQLPRLVHQALISHHEAPRAISDDLIRQILVEQRRTNRLLQALLVFGLAVGAGAVIARVLIVLAYGG</sequence>
<proteinExistence type="inferred from homology"/>
<comment type="function">
    <text evidence="1">Is probably a protein kinase regulator of UbiI activity which is involved in aerobic coenzyme Q (ubiquinone) biosynthesis.</text>
</comment>
<comment type="pathway">
    <text>Cofactor biosynthesis; ubiquinone biosynthesis [regulation].</text>
</comment>
<comment type="subcellular location">
    <subcellularLocation>
        <location evidence="1">Cell inner membrane</location>
        <topology evidence="1">Single-pass membrane protein</topology>
    </subcellularLocation>
</comment>
<comment type="similarity">
    <text evidence="1">Belongs to the ABC1 family. UbiB subfamily.</text>
</comment>